<comment type="function">
    <text evidence="1">Forms part of the ribosomal stalk, playing a central role in the interaction of the ribosome with GTP-bound translation factors.</text>
</comment>
<comment type="subunit">
    <text evidence="1">Part of the ribosomal stalk of the 50S ribosomal subunit. The N-terminus interacts with L11 and the large rRNA to form the base of the stalk. The C-terminus forms an elongated spine to which L12 dimers bind in a sequential fashion forming a multimeric L10(L12)X complex (By similarity).</text>
</comment>
<comment type="similarity">
    <text evidence="2">Belongs to the universal ribosomal protein uL10 family.</text>
</comment>
<evidence type="ECO:0000250" key="1"/>
<evidence type="ECO:0000305" key="2"/>
<protein>
    <recommendedName>
        <fullName evidence="2">Large ribosomal subunit protein uL10</fullName>
    </recommendedName>
    <alternativeName>
        <fullName>50S ribosomal protein L10</fullName>
    </alternativeName>
</protein>
<dbReference type="EMBL" id="AE005176">
    <property type="protein sequence ID" value="AAK05367.1"/>
    <property type="molecule type" value="Genomic_DNA"/>
</dbReference>
<dbReference type="PIR" id="E86783">
    <property type="entry name" value="E86783"/>
</dbReference>
<dbReference type="RefSeq" id="NP_267425.1">
    <property type="nucleotide sequence ID" value="NC_002662.1"/>
</dbReference>
<dbReference type="RefSeq" id="WP_003130213.1">
    <property type="nucleotide sequence ID" value="NC_002662.1"/>
</dbReference>
<dbReference type="SMR" id="Q9CG41"/>
<dbReference type="PaxDb" id="272623-L0407"/>
<dbReference type="EnsemblBacteria" id="AAK05367">
    <property type="protein sequence ID" value="AAK05367"/>
    <property type="gene ID" value="L0407"/>
</dbReference>
<dbReference type="GeneID" id="89633474"/>
<dbReference type="KEGG" id="lla:L0407"/>
<dbReference type="PATRIC" id="fig|272623.7.peg.1372"/>
<dbReference type="eggNOG" id="COG0244">
    <property type="taxonomic scope" value="Bacteria"/>
</dbReference>
<dbReference type="HOGENOM" id="CLU_092227_2_0_9"/>
<dbReference type="OrthoDB" id="9808307at2"/>
<dbReference type="Proteomes" id="UP000002196">
    <property type="component" value="Chromosome"/>
</dbReference>
<dbReference type="GO" id="GO:0015934">
    <property type="term" value="C:large ribosomal subunit"/>
    <property type="evidence" value="ECO:0007669"/>
    <property type="project" value="InterPro"/>
</dbReference>
<dbReference type="GO" id="GO:0070180">
    <property type="term" value="F:large ribosomal subunit rRNA binding"/>
    <property type="evidence" value="ECO:0007669"/>
    <property type="project" value="UniProtKB-UniRule"/>
</dbReference>
<dbReference type="GO" id="GO:0003735">
    <property type="term" value="F:structural constituent of ribosome"/>
    <property type="evidence" value="ECO:0007669"/>
    <property type="project" value="InterPro"/>
</dbReference>
<dbReference type="GO" id="GO:0006412">
    <property type="term" value="P:translation"/>
    <property type="evidence" value="ECO:0007669"/>
    <property type="project" value="UniProtKB-UniRule"/>
</dbReference>
<dbReference type="CDD" id="cd05797">
    <property type="entry name" value="Ribosomal_L10"/>
    <property type="match status" value="1"/>
</dbReference>
<dbReference type="FunFam" id="3.30.70.1730:FF:000001">
    <property type="entry name" value="50S ribosomal protein L10"/>
    <property type="match status" value="1"/>
</dbReference>
<dbReference type="Gene3D" id="3.30.70.1730">
    <property type="match status" value="1"/>
</dbReference>
<dbReference type="HAMAP" id="MF_00362">
    <property type="entry name" value="Ribosomal_uL10"/>
    <property type="match status" value="1"/>
</dbReference>
<dbReference type="InterPro" id="IPR001790">
    <property type="entry name" value="Ribosomal_uL10"/>
</dbReference>
<dbReference type="InterPro" id="IPR043141">
    <property type="entry name" value="Ribosomal_uL10-like_sf"/>
</dbReference>
<dbReference type="InterPro" id="IPR022973">
    <property type="entry name" value="Ribosomal_uL10_bac"/>
</dbReference>
<dbReference type="InterPro" id="IPR047865">
    <property type="entry name" value="Ribosomal_uL10_bac_type"/>
</dbReference>
<dbReference type="InterPro" id="IPR002363">
    <property type="entry name" value="Ribosomal_uL10_CS_bac"/>
</dbReference>
<dbReference type="NCBIfam" id="NF000955">
    <property type="entry name" value="PRK00099.1-1"/>
    <property type="match status" value="1"/>
</dbReference>
<dbReference type="PANTHER" id="PTHR11560">
    <property type="entry name" value="39S RIBOSOMAL PROTEIN L10, MITOCHONDRIAL"/>
    <property type="match status" value="1"/>
</dbReference>
<dbReference type="Pfam" id="PF00466">
    <property type="entry name" value="Ribosomal_L10"/>
    <property type="match status" value="1"/>
</dbReference>
<dbReference type="SUPFAM" id="SSF160369">
    <property type="entry name" value="Ribosomal protein L10-like"/>
    <property type="match status" value="1"/>
</dbReference>
<dbReference type="PROSITE" id="PS01109">
    <property type="entry name" value="RIBOSOMAL_L10"/>
    <property type="match status" value="1"/>
</dbReference>
<accession>Q9CG41</accession>
<keyword id="KW-1185">Reference proteome</keyword>
<keyword id="KW-0687">Ribonucleoprotein</keyword>
<keyword id="KW-0689">Ribosomal protein</keyword>
<keyword id="KW-0694">RNA-binding</keyword>
<keyword id="KW-0699">rRNA-binding</keyword>
<organism>
    <name type="scientific">Lactococcus lactis subsp. lactis (strain IL1403)</name>
    <name type="common">Streptococcus lactis</name>
    <dbReference type="NCBI Taxonomy" id="272623"/>
    <lineage>
        <taxon>Bacteria</taxon>
        <taxon>Bacillati</taxon>
        <taxon>Bacillota</taxon>
        <taxon>Bacilli</taxon>
        <taxon>Lactobacillales</taxon>
        <taxon>Streptococcaceae</taxon>
        <taxon>Lactococcus</taxon>
    </lineage>
</organism>
<feature type="chain" id="PRO_0000154646" description="Large ribosomal subunit protein uL10">
    <location>
        <begin position="1"/>
        <end position="171"/>
    </location>
</feature>
<reference key="1">
    <citation type="journal article" date="2001" name="Genome Res.">
        <title>The complete genome sequence of the lactic acid bacterium Lactococcus lactis ssp. lactis IL1403.</title>
        <authorList>
            <person name="Bolotin A."/>
            <person name="Wincker P."/>
            <person name="Mauger S."/>
            <person name="Jaillon O."/>
            <person name="Malarme K."/>
            <person name="Weissenbach J."/>
            <person name="Ehrlich S.D."/>
            <person name="Sorokin A."/>
        </authorList>
    </citation>
    <scope>NUCLEOTIDE SEQUENCE [LARGE SCALE GENOMIC DNA]</scope>
    <source>
        <strain>IL1403</strain>
    </source>
</reference>
<gene>
    <name type="primary">rplJ</name>
    <name type="ordered locus">LL1269</name>
    <name type="ORF">L0407</name>
</gene>
<name>RL10_LACLA</name>
<sequence>MSDYKVNEATIAKKAELVDVYAQKMTEAASIVVADSRGLSVDQDTQLRKQLREAGVEFKVVKNSVLRRAAEKAGLEGLSEAFSGPSAVAFSNEDVVAPAKVLADFAKDAENLEIKAGVIEGKVSSKEEIQAIASLPSRDGLLSMLLSVLQAPVRNVALAVKAVAEKEESAA</sequence>
<proteinExistence type="inferred from homology"/>